<sequence>MKDVYLYIVEKSVALEFDSAEYGRLARKTVELLYDRKEELTDDRIAILLNISTAETRRILQYLMKQNLVGVKKRSTEDYRIEYTWYVNDEVISQAVKYRAKVVREKISLMIKALTEEAFYVCPNCFMRYPVEEVMERGGVCPICGSHLEYVENVEEINKLTKVFEKLDKI</sequence>
<protein>
    <recommendedName>
        <fullName evidence="1">Transcription factor E</fullName>
        <shortName evidence="1">TFE</shortName>
    </recommendedName>
    <alternativeName>
        <fullName evidence="1">TFIIE subunit alpha homolog</fullName>
    </alternativeName>
    <alternativeName>
        <fullName evidence="1">Transcription initiation factor TFIIE</fullName>
    </alternativeName>
</protein>
<gene>
    <name evidence="1" type="primary">tfe</name>
    <name type="ordered locus">Pcal_2147</name>
</gene>
<keyword id="KW-0238">DNA-binding</keyword>
<keyword id="KW-0804">Transcription</keyword>
<keyword id="KW-0805">Transcription regulation</keyword>
<organism>
    <name type="scientific">Pyrobaculum calidifontis (strain DSM 21063 / JCM 11548 / VA1)</name>
    <dbReference type="NCBI Taxonomy" id="410359"/>
    <lineage>
        <taxon>Archaea</taxon>
        <taxon>Thermoproteota</taxon>
        <taxon>Thermoprotei</taxon>
        <taxon>Thermoproteales</taxon>
        <taxon>Thermoproteaceae</taxon>
        <taxon>Pyrobaculum</taxon>
    </lineage>
</organism>
<dbReference type="EMBL" id="CP000561">
    <property type="protein sequence ID" value="ABO09562.1"/>
    <property type="molecule type" value="Genomic_DNA"/>
</dbReference>
<dbReference type="RefSeq" id="WP_011850820.1">
    <property type="nucleotide sequence ID" value="NC_009073.1"/>
</dbReference>
<dbReference type="SMR" id="A3MY45"/>
<dbReference type="STRING" id="410359.Pcal_2147"/>
<dbReference type="GeneID" id="4909133"/>
<dbReference type="KEGG" id="pcl:Pcal_2147"/>
<dbReference type="eggNOG" id="arCOG04270">
    <property type="taxonomic scope" value="Archaea"/>
</dbReference>
<dbReference type="HOGENOM" id="CLU_100097_1_0_2"/>
<dbReference type="OrthoDB" id="5935at2157"/>
<dbReference type="Proteomes" id="UP000001431">
    <property type="component" value="Chromosome"/>
</dbReference>
<dbReference type="GO" id="GO:0003677">
    <property type="term" value="F:DNA binding"/>
    <property type="evidence" value="ECO:0007669"/>
    <property type="project" value="UniProtKB-KW"/>
</dbReference>
<dbReference type="GO" id="GO:0006355">
    <property type="term" value="P:regulation of DNA-templated transcription"/>
    <property type="evidence" value="ECO:0007669"/>
    <property type="project" value="InterPro"/>
</dbReference>
<dbReference type="GO" id="GO:0006367">
    <property type="term" value="P:transcription initiation at RNA polymerase II promoter"/>
    <property type="evidence" value="ECO:0007669"/>
    <property type="project" value="InterPro"/>
</dbReference>
<dbReference type="Gene3D" id="1.10.10.10">
    <property type="entry name" value="Winged helix-like DNA-binding domain superfamily/Winged helix DNA-binding domain"/>
    <property type="match status" value="1"/>
</dbReference>
<dbReference type="HAMAP" id="MF_01909">
    <property type="entry name" value="TFE_arch"/>
    <property type="match status" value="1"/>
</dbReference>
<dbReference type="InterPro" id="IPR016481">
    <property type="entry name" value="TF_E_archaea"/>
</dbReference>
<dbReference type="InterPro" id="IPR039997">
    <property type="entry name" value="TFE"/>
</dbReference>
<dbReference type="InterPro" id="IPR017919">
    <property type="entry name" value="TFIIE/TFIIEa_HTH"/>
</dbReference>
<dbReference type="InterPro" id="IPR002853">
    <property type="entry name" value="TFIIE_asu"/>
</dbReference>
<dbReference type="InterPro" id="IPR024550">
    <property type="entry name" value="TFIIEa/SarR/Rpc3_HTH_dom"/>
</dbReference>
<dbReference type="InterPro" id="IPR036388">
    <property type="entry name" value="WH-like_DNA-bd_sf"/>
</dbReference>
<dbReference type="InterPro" id="IPR036390">
    <property type="entry name" value="WH_DNA-bd_sf"/>
</dbReference>
<dbReference type="PANTHER" id="PTHR13097:SF7">
    <property type="entry name" value="GENERAL TRANSCRIPTION FACTOR IIE SUBUNIT 1"/>
    <property type="match status" value="1"/>
</dbReference>
<dbReference type="PANTHER" id="PTHR13097">
    <property type="entry name" value="TRANSCRIPTION INITIATION FACTOR IIE, ALPHA SUBUNIT"/>
    <property type="match status" value="1"/>
</dbReference>
<dbReference type="Pfam" id="PF02002">
    <property type="entry name" value="TFIIE_alpha"/>
    <property type="match status" value="1"/>
</dbReference>
<dbReference type="PIRSF" id="PIRSF006373">
    <property type="entry name" value="TF_E_archaea"/>
    <property type="match status" value="1"/>
</dbReference>
<dbReference type="SMART" id="SM00531">
    <property type="entry name" value="TFIIE"/>
    <property type="match status" value="1"/>
</dbReference>
<dbReference type="SUPFAM" id="SSF46785">
    <property type="entry name" value="Winged helix' DNA-binding domain"/>
    <property type="match status" value="1"/>
</dbReference>
<dbReference type="PROSITE" id="PS51344">
    <property type="entry name" value="HTH_TFE_IIE"/>
    <property type="match status" value="1"/>
</dbReference>
<name>TFE_PYRCJ</name>
<feature type="chain" id="PRO_0000326617" description="Transcription factor E">
    <location>
        <begin position="1"/>
        <end position="170"/>
    </location>
</feature>
<feature type="domain" description="HTH TFE/IIEalpha-type" evidence="1">
    <location>
        <begin position="1"/>
        <end position="93"/>
    </location>
</feature>
<comment type="function">
    <text evidence="1">Transcription factor that plays a role in the activation of archaeal genes transcribed by RNA polymerase. Facilitates transcription initiation by enhancing TATA-box recognition by TATA-box-binding protein (Tbp), and transcription factor B (Tfb) and RNA polymerase recruitment. Not absolutely required for transcription in vitro, but particularly important in cases where Tbp or Tfb function is not optimal. It dynamically alters the nucleic acid-binding properties of RNA polymerases by stabilizing the initiation complex and destabilizing elongation complexes. Seems to translocate with the RNA polymerase following initiation and acts by binding to the non template strand of the transcription bubble in elongation complexes.</text>
</comment>
<comment type="subunit">
    <text evidence="1">Monomer. Interaction with RNA polymerase subunits RpoF and RpoE is necessary for Tfe stimulatory transcription activity. Able to interact with Tbp and RNA polymerase in the absence of DNA promoter. Interacts both with the preinitiation and elongation complexes.</text>
</comment>
<comment type="domain">
    <text evidence="1">The winged helix domain is involved in binding to DNA in the preinitiation complex.</text>
</comment>
<comment type="similarity">
    <text evidence="1">Belongs to the TFE family.</text>
</comment>
<proteinExistence type="inferred from homology"/>
<reference key="1">
    <citation type="submission" date="2007-02" db="EMBL/GenBank/DDBJ databases">
        <title>Complete sequence of Pyrobaculum calidifontis JCM 11548.</title>
        <authorList>
            <consortium name="US DOE Joint Genome Institute"/>
            <person name="Copeland A."/>
            <person name="Lucas S."/>
            <person name="Lapidus A."/>
            <person name="Barry K."/>
            <person name="Glavina del Rio T."/>
            <person name="Dalin E."/>
            <person name="Tice H."/>
            <person name="Pitluck S."/>
            <person name="Chain P."/>
            <person name="Malfatti S."/>
            <person name="Shin M."/>
            <person name="Vergez L."/>
            <person name="Schmutz J."/>
            <person name="Larimer F."/>
            <person name="Land M."/>
            <person name="Hauser L."/>
            <person name="Kyrpides N."/>
            <person name="Mikhailova N."/>
            <person name="Cozen A.E."/>
            <person name="Fitz-Gibbon S.T."/>
            <person name="House C.H."/>
            <person name="Saltikov C."/>
            <person name="Lowe T.M."/>
            <person name="Richardson P."/>
        </authorList>
    </citation>
    <scope>NUCLEOTIDE SEQUENCE [LARGE SCALE GENOMIC DNA]</scope>
    <source>
        <strain>DSM 21063 / JCM 11548 / VA1</strain>
    </source>
</reference>
<accession>A3MY45</accession>
<evidence type="ECO:0000255" key="1">
    <source>
        <dbReference type="HAMAP-Rule" id="MF_01909"/>
    </source>
</evidence>